<evidence type="ECO:0000255" key="1">
    <source>
        <dbReference type="HAMAP-Rule" id="MF_00175"/>
    </source>
</evidence>
<evidence type="ECO:0000255" key="2">
    <source>
        <dbReference type="PROSITE-ProRule" id="PRU01250"/>
    </source>
</evidence>
<accession>Q88VE2</accession>
<accession>F9UQ63</accession>
<comment type="function">
    <text evidence="1">ATP-dependent specificity component of the Clp protease. It directs the protease to specific substrates. Can perform chaperone functions in the absence of ClpP.</text>
</comment>
<comment type="subunit">
    <text evidence="1">Component of the ClpX-ClpP complex. Forms a hexameric ring that, in the presence of ATP, binds to fourteen ClpP subunits assembled into a disk-like structure with a central cavity, resembling the structure of eukaryotic proteasomes.</text>
</comment>
<comment type="similarity">
    <text evidence="1">Belongs to the ClpX chaperone family.</text>
</comment>
<keyword id="KW-0067">ATP-binding</keyword>
<keyword id="KW-0143">Chaperone</keyword>
<keyword id="KW-0479">Metal-binding</keyword>
<keyword id="KW-0547">Nucleotide-binding</keyword>
<keyword id="KW-1185">Reference proteome</keyword>
<keyword id="KW-0862">Zinc</keyword>
<name>CLPX_LACPL</name>
<sequence length="421" mass="46519">MFENTETNGPVNCSFCGKSQDQVKKIVAGPGVYICNECIDLCKEIIDEEFSEEQTHELTDIPTPKEIVDELDQYVIGQNEAKRTLSVAVYNHYKRVKAMADNDEETEDGPELQKSNISLVGPTGSGKTFLAQSLARILDVPFAIADATTLTEAGYVGEDVENILLKLLQNADYDVERAEKGIIYIDEIDKIAKKSENVSITRDVSGEGVQQALLKILEGTIANVPPQGGRKHPQQEFIQIDTTNILFIVGGAFDGIEDIVKRRLGDKTIGFGTDTDGKNAVLDDSKSLMQQVVPEDLLQFGLIPEFIGRLPILTALERLTEDDLVRILTEPKNALVKQYQRLIALDGAELDFNDDALRAIAQEALARNTGARGLRSIIEDTMRDIMYDIPSREDVKKVIITRETVADHAEPELVLADQKAS</sequence>
<feature type="chain" id="PRO_0000160371" description="ATP-dependent Clp protease ATP-binding subunit ClpX">
    <location>
        <begin position="1"/>
        <end position="421"/>
    </location>
</feature>
<feature type="domain" description="ClpX-type ZB" evidence="2">
    <location>
        <begin position="1"/>
        <end position="54"/>
    </location>
</feature>
<feature type="binding site" evidence="2">
    <location>
        <position position="13"/>
    </location>
    <ligand>
        <name>Zn(2+)</name>
        <dbReference type="ChEBI" id="CHEBI:29105"/>
    </ligand>
</feature>
<feature type="binding site" evidence="2">
    <location>
        <position position="16"/>
    </location>
    <ligand>
        <name>Zn(2+)</name>
        <dbReference type="ChEBI" id="CHEBI:29105"/>
    </ligand>
</feature>
<feature type="binding site" evidence="2">
    <location>
        <position position="35"/>
    </location>
    <ligand>
        <name>Zn(2+)</name>
        <dbReference type="ChEBI" id="CHEBI:29105"/>
    </ligand>
</feature>
<feature type="binding site" evidence="2">
    <location>
        <position position="38"/>
    </location>
    <ligand>
        <name>Zn(2+)</name>
        <dbReference type="ChEBI" id="CHEBI:29105"/>
    </ligand>
</feature>
<feature type="binding site" evidence="1">
    <location>
        <begin position="122"/>
        <end position="129"/>
    </location>
    <ligand>
        <name>ATP</name>
        <dbReference type="ChEBI" id="CHEBI:30616"/>
    </ligand>
</feature>
<reference key="1">
    <citation type="journal article" date="2003" name="Proc. Natl. Acad. Sci. U.S.A.">
        <title>Complete genome sequence of Lactobacillus plantarum WCFS1.</title>
        <authorList>
            <person name="Kleerebezem M."/>
            <person name="Boekhorst J."/>
            <person name="van Kranenburg R."/>
            <person name="Molenaar D."/>
            <person name="Kuipers O.P."/>
            <person name="Leer R."/>
            <person name="Tarchini R."/>
            <person name="Peters S.A."/>
            <person name="Sandbrink H.M."/>
            <person name="Fiers M.W.E.J."/>
            <person name="Stiekema W."/>
            <person name="Klein Lankhorst R.M."/>
            <person name="Bron P.A."/>
            <person name="Hoffer S.M."/>
            <person name="Nierop Groot M.N."/>
            <person name="Kerkhoven R."/>
            <person name="De Vries M."/>
            <person name="Ursing B."/>
            <person name="De Vos W.M."/>
            <person name="Siezen R.J."/>
        </authorList>
    </citation>
    <scope>NUCLEOTIDE SEQUENCE [LARGE SCALE GENOMIC DNA]</scope>
    <source>
        <strain>ATCC BAA-793 / NCIMB 8826 / WCFS1</strain>
    </source>
</reference>
<reference key="2">
    <citation type="journal article" date="2012" name="J. Bacteriol.">
        <title>Complete resequencing and reannotation of the Lactobacillus plantarum WCFS1 genome.</title>
        <authorList>
            <person name="Siezen R.J."/>
            <person name="Francke C."/>
            <person name="Renckens B."/>
            <person name="Boekhorst J."/>
            <person name="Wels M."/>
            <person name="Kleerebezem M."/>
            <person name="van Hijum S.A."/>
        </authorList>
    </citation>
    <scope>NUCLEOTIDE SEQUENCE [LARGE SCALE GENOMIC DNA]</scope>
    <scope>GENOME REANNOTATION</scope>
    <source>
        <strain>ATCC BAA-793 / NCIMB 8826 / WCFS1</strain>
    </source>
</reference>
<protein>
    <recommendedName>
        <fullName evidence="1">ATP-dependent Clp protease ATP-binding subunit ClpX</fullName>
    </recommendedName>
</protein>
<gene>
    <name evidence="1" type="primary">clpX</name>
    <name type="ordered locus">lp_2116</name>
</gene>
<proteinExistence type="inferred from homology"/>
<organism>
    <name type="scientific">Lactiplantibacillus plantarum (strain ATCC BAA-793 / NCIMB 8826 / WCFS1)</name>
    <name type="common">Lactobacillus plantarum</name>
    <dbReference type="NCBI Taxonomy" id="220668"/>
    <lineage>
        <taxon>Bacteria</taxon>
        <taxon>Bacillati</taxon>
        <taxon>Bacillota</taxon>
        <taxon>Bacilli</taxon>
        <taxon>Lactobacillales</taxon>
        <taxon>Lactobacillaceae</taxon>
        <taxon>Lactiplantibacillus</taxon>
    </lineage>
</organism>
<dbReference type="EMBL" id="AL935263">
    <property type="protein sequence ID" value="CCC79352.1"/>
    <property type="molecule type" value="Genomic_DNA"/>
</dbReference>
<dbReference type="RefSeq" id="WP_003640796.1">
    <property type="nucleotide sequence ID" value="NC_004567.2"/>
</dbReference>
<dbReference type="RefSeq" id="YP_004889866.1">
    <property type="nucleotide sequence ID" value="NC_004567.2"/>
</dbReference>
<dbReference type="SMR" id="Q88VE2"/>
<dbReference type="STRING" id="220668.lp_2116"/>
<dbReference type="EnsemblBacteria" id="CCC79352">
    <property type="protein sequence ID" value="CCC79352"/>
    <property type="gene ID" value="lp_2116"/>
</dbReference>
<dbReference type="GeneID" id="89669393"/>
<dbReference type="KEGG" id="lpl:lp_2116"/>
<dbReference type="PATRIC" id="fig|220668.9.peg.1793"/>
<dbReference type="eggNOG" id="COG1219">
    <property type="taxonomic scope" value="Bacteria"/>
</dbReference>
<dbReference type="HOGENOM" id="CLU_014218_8_2_9"/>
<dbReference type="OrthoDB" id="9804062at2"/>
<dbReference type="PhylomeDB" id="Q88VE2"/>
<dbReference type="Proteomes" id="UP000000432">
    <property type="component" value="Chromosome"/>
</dbReference>
<dbReference type="GO" id="GO:0009376">
    <property type="term" value="C:HslUV protease complex"/>
    <property type="evidence" value="ECO:0007669"/>
    <property type="project" value="TreeGrafter"/>
</dbReference>
<dbReference type="GO" id="GO:0005524">
    <property type="term" value="F:ATP binding"/>
    <property type="evidence" value="ECO:0007669"/>
    <property type="project" value="UniProtKB-UniRule"/>
</dbReference>
<dbReference type="GO" id="GO:0016887">
    <property type="term" value="F:ATP hydrolysis activity"/>
    <property type="evidence" value="ECO:0007669"/>
    <property type="project" value="InterPro"/>
</dbReference>
<dbReference type="GO" id="GO:0140662">
    <property type="term" value="F:ATP-dependent protein folding chaperone"/>
    <property type="evidence" value="ECO:0007669"/>
    <property type="project" value="InterPro"/>
</dbReference>
<dbReference type="GO" id="GO:0046983">
    <property type="term" value="F:protein dimerization activity"/>
    <property type="evidence" value="ECO:0007669"/>
    <property type="project" value="InterPro"/>
</dbReference>
<dbReference type="GO" id="GO:0051082">
    <property type="term" value="F:unfolded protein binding"/>
    <property type="evidence" value="ECO:0007669"/>
    <property type="project" value="UniProtKB-UniRule"/>
</dbReference>
<dbReference type="GO" id="GO:0008270">
    <property type="term" value="F:zinc ion binding"/>
    <property type="evidence" value="ECO:0007669"/>
    <property type="project" value="InterPro"/>
</dbReference>
<dbReference type="GO" id="GO:0051301">
    <property type="term" value="P:cell division"/>
    <property type="evidence" value="ECO:0007669"/>
    <property type="project" value="TreeGrafter"/>
</dbReference>
<dbReference type="GO" id="GO:0051603">
    <property type="term" value="P:proteolysis involved in protein catabolic process"/>
    <property type="evidence" value="ECO:0007669"/>
    <property type="project" value="TreeGrafter"/>
</dbReference>
<dbReference type="CDD" id="cd19497">
    <property type="entry name" value="RecA-like_ClpX"/>
    <property type="match status" value="1"/>
</dbReference>
<dbReference type="FunFam" id="1.10.8.60:FF:000002">
    <property type="entry name" value="ATP-dependent Clp protease ATP-binding subunit ClpX"/>
    <property type="match status" value="1"/>
</dbReference>
<dbReference type="FunFam" id="3.40.50.300:FF:000005">
    <property type="entry name" value="ATP-dependent Clp protease ATP-binding subunit ClpX"/>
    <property type="match status" value="1"/>
</dbReference>
<dbReference type="Gene3D" id="1.10.8.60">
    <property type="match status" value="1"/>
</dbReference>
<dbReference type="Gene3D" id="6.20.220.10">
    <property type="entry name" value="ClpX chaperone, C4-type zinc finger domain"/>
    <property type="match status" value="1"/>
</dbReference>
<dbReference type="Gene3D" id="3.40.50.300">
    <property type="entry name" value="P-loop containing nucleotide triphosphate hydrolases"/>
    <property type="match status" value="1"/>
</dbReference>
<dbReference type="HAMAP" id="MF_00175">
    <property type="entry name" value="ClpX"/>
    <property type="match status" value="1"/>
</dbReference>
<dbReference type="InterPro" id="IPR003593">
    <property type="entry name" value="AAA+_ATPase"/>
</dbReference>
<dbReference type="InterPro" id="IPR050052">
    <property type="entry name" value="ATP-dep_Clp_protease_ClpX"/>
</dbReference>
<dbReference type="InterPro" id="IPR003959">
    <property type="entry name" value="ATPase_AAA_core"/>
</dbReference>
<dbReference type="InterPro" id="IPR019489">
    <property type="entry name" value="Clp_ATPase_C"/>
</dbReference>
<dbReference type="InterPro" id="IPR004487">
    <property type="entry name" value="Clp_protease_ATP-bd_su_ClpX"/>
</dbReference>
<dbReference type="InterPro" id="IPR046425">
    <property type="entry name" value="ClpX_bact"/>
</dbReference>
<dbReference type="InterPro" id="IPR027417">
    <property type="entry name" value="P-loop_NTPase"/>
</dbReference>
<dbReference type="InterPro" id="IPR010603">
    <property type="entry name" value="Znf_CppX_C4"/>
</dbReference>
<dbReference type="InterPro" id="IPR038366">
    <property type="entry name" value="Znf_CppX_C4_sf"/>
</dbReference>
<dbReference type="NCBIfam" id="TIGR00382">
    <property type="entry name" value="clpX"/>
    <property type="match status" value="1"/>
</dbReference>
<dbReference type="NCBIfam" id="NF003745">
    <property type="entry name" value="PRK05342.1"/>
    <property type="match status" value="1"/>
</dbReference>
<dbReference type="PANTHER" id="PTHR48102:SF7">
    <property type="entry name" value="ATP-DEPENDENT CLP PROTEASE ATP-BINDING SUBUNIT CLPX-LIKE, MITOCHONDRIAL"/>
    <property type="match status" value="1"/>
</dbReference>
<dbReference type="PANTHER" id="PTHR48102">
    <property type="entry name" value="ATP-DEPENDENT CLP PROTEASE ATP-BINDING SUBUNIT CLPX-LIKE, MITOCHONDRIAL-RELATED"/>
    <property type="match status" value="1"/>
</dbReference>
<dbReference type="Pfam" id="PF07724">
    <property type="entry name" value="AAA_2"/>
    <property type="match status" value="1"/>
</dbReference>
<dbReference type="Pfam" id="PF10431">
    <property type="entry name" value="ClpB_D2-small"/>
    <property type="match status" value="1"/>
</dbReference>
<dbReference type="Pfam" id="PF06689">
    <property type="entry name" value="zf-C4_ClpX"/>
    <property type="match status" value="1"/>
</dbReference>
<dbReference type="SMART" id="SM00382">
    <property type="entry name" value="AAA"/>
    <property type="match status" value="1"/>
</dbReference>
<dbReference type="SMART" id="SM01086">
    <property type="entry name" value="ClpB_D2-small"/>
    <property type="match status" value="1"/>
</dbReference>
<dbReference type="SMART" id="SM00994">
    <property type="entry name" value="zf-C4_ClpX"/>
    <property type="match status" value="1"/>
</dbReference>
<dbReference type="SUPFAM" id="SSF57716">
    <property type="entry name" value="Glucocorticoid receptor-like (DNA-binding domain)"/>
    <property type="match status" value="1"/>
</dbReference>
<dbReference type="SUPFAM" id="SSF52540">
    <property type="entry name" value="P-loop containing nucleoside triphosphate hydrolases"/>
    <property type="match status" value="1"/>
</dbReference>
<dbReference type="PROSITE" id="PS51902">
    <property type="entry name" value="CLPX_ZB"/>
    <property type="match status" value="1"/>
</dbReference>